<gene>
    <name evidence="1" type="primary">apaH</name>
    <name type="ordered locus">EcolC_3606</name>
</gene>
<comment type="function">
    <text evidence="1">Hydrolyzes diadenosine 5',5'''-P1,P4-tetraphosphate to yield ADP.</text>
</comment>
<comment type="catalytic activity">
    <reaction evidence="1">
        <text>P(1),P(4)-bis(5'-adenosyl) tetraphosphate + H2O = 2 ADP + 2 H(+)</text>
        <dbReference type="Rhea" id="RHEA:24252"/>
        <dbReference type="ChEBI" id="CHEBI:15377"/>
        <dbReference type="ChEBI" id="CHEBI:15378"/>
        <dbReference type="ChEBI" id="CHEBI:58141"/>
        <dbReference type="ChEBI" id="CHEBI:456216"/>
        <dbReference type="EC" id="3.6.1.41"/>
    </reaction>
</comment>
<comment type="similarity">
    <text evidence="1">Belongs to the Ap4A hydrolase family.</text>
</comment>
<protein>
    <recommendedName>
        <fullName evidence="1">Bis(5'-nucleosyl)-tetraphosphatase, symmetrical</fullName>
        <ecNumber evidence="1">3.6.1.41</ecNumber>
    </recommendedName>
    <alternativeName>
        <fullName evidence="1">Ap4A hydrolase</fullName>
    </alternativeName>
    <alternativeName>
        <fullName evidence="1">Diadenosine 5',5'''-P1,P4-tetraphosphate pyrophosphohydrolase</fullName>
    </alternativeName>
    <alternativeName>
        <fullName evidence="1">Diadenosine tetraphosphatase</fullName>
    </alternativeName>
</protein>
<accession>B1IRC7</accession>
<name>APAH_ECOLC</name>
<organism>
    <name type="scientific">Escherichia coli (strain ATCC 8739 / DSM 1576 / NBRC 3972 / NCIMB 8545 / WDCM 00012 / Crooks)</name>
    <dbReference type="NCBI Taxonomy" id="481805"/>
    <lineage>
        <taxon>Bacteria</taxon>
        <taxon>Pseudomonadati</taxon>
        <taxon>Pseudomonadota</taxon>
        <taxon>Gammaproteobacteria</taxon>
        <taxon>Enterobacterales</taxon>
        <taxon>Enterobacteriaceae</taxon>
        <taxon>Escherichia</taxon>
    </lineage>
</organism>
<keyword id="KW-0378">Hydrolase</keyword>
<feature type="chain" id="PRO_1000077714" description="Bis(5'-nucleosyl)-tetraphosphatase, symmetrical">
    <location>
        <begin position="1"/>
        <end position="280"/>
    </location>
</feature>
<dbReference type="EC" id="3.6.1.41" evidence="1"/>
<dbReference type="EMBL" id="CP000946">
    <property type="protein sequence ID" value="ACA79220.1"/>
    <property type="molecule type" value="Genomic_DNA"/>
</dbReference>
<dbReference type="RefSeq" id="WP_000257192.1">
    <property type="nucleotide sequence ID" value="NZ_MTFT01000035.1"/>
</dbReference>
<dbReference type="SMR" id="B1IRC7"/>
<dbReference type="GeneID" id="93777386"/>
<dbReference type="KEGG" id="ecl:EcolC_3606"/>
<dbReference type="HOGENOM" id="CLU_056184_2_0_6"/>
<dbReference type="GO" id="GO:0008803">
    <property type="term" value="F:bis(5'-nucleosyl)-tetraphosphatase (symmetrical) activity"/>
    <property type="evidence" value="ECO:0007669"/>
    <property type="project" value="UniProtKB-UniRule"/>
</dbReference>
<dbReference type="CDD" id="cd07422">
    <property type="entry name" value="MPP_ApaH"/>
    <property type="match status" value="1"/>
</dbReference>
<dbReference type="FunFam" id="3.60.21.10:FF:000013">
    <property type="entry name" value="Bis(5'-nucleosyl)-tetraphosphatase, symmetrical"/>
    <property type="match status" value="1"/>
</dbReference>
<dbReference type="Gene3D" id="3.60.21.10">
    <property type="match status" value="1"/>
</dbReference>
<dbReference type="HAMAP" id="MF_00199">
    <property type="entry name" value="ApaH"/>
    <property type="match status" value="1"/>
</dbReference>
<dbReference type="InterPro" id="IPR004617">
    <property type="entry name" value="ApaH"/>
</dbReference>
<dbReference type="InterPro" id="IPR004843">
    <property type="entry name" value="Calcineurin-like_PHP_ApaH"/>
</dbReference>
<dbReference type="InterPro" id="IPR029052">
    <property type="entry name" value="Metallo-depent_PP-like"/>
</dbReference>
<dbReference type="NCBIfam" id="TIGR00668">
    <property type="entry name" value="apaH"/>
    <property type="match status" value="1"/>
</dbReference>
<dbReference type="NCBIfam" id="NF001204">
    <property type="entry name" value="PRK00166.1"/>
    <property type="match status" value="1"/>
</dbReference>
<dbReference type="PANTHER" id="PTHR40942">
    <property type="match status" value="1"/>
</dbReference>
<dbReference type="PANTHER" id="PTHR40942:SF4">
    <property type="entry name" value="CYTOCHROME C5"/>
    <property type="match status" value="1"/>
</dbReference>
<dbReference type="Pfam" id="PF00149">
    <property type="entry name" value="Metallophos"/>
    <property type="match status" value="1"/>
</dbReference>
<dbReference type="PIRSF" id="PIRSF000903">
    <property type="entry name" value="B5n-ttraPtase_sm"/>
    <property type="match status" value="1"/>
</dbReference>
<dbReference type="SUPFAM" id="SSF56300">
    <property type="entry name" value="Metallo-dependent phosphatases"/>
    <property type="match status" value="1"/>
</dbReference>
<evidence type="ECO:0000255" key="1">
    <source>
        <dbReference type="HAMAP-Rule" id="MF_00199"/>
    </source>
</evidence>
<sequence>MATYLIGDVHGCYDELIALLHKVEFTPGKDTLWLTGDLVARGPGSLDVLRYVKSLGDSVRLVLGNHDLHLLAVFAGISRNKPKDRLTPLLEAPDADELLNWLRRQPLLQIDEEKKLVMAHAGITPQWDLQTAKECARDVEAVLSSDSYPFFLDAMYGDMPNNWSPELRGLGRLRFITNAFTRMRFCFPNGQLDMYSKESPEEAPAPLKPWFAIPGPVAEEYSIAFGHWASLEGKGTPEGIYALDTGCCWGGTLTCLRWEDKQYFVQPSNRHKDLGEAAAS</sequence>
<reference key="1">
    <citation type="submission" date="2008-02" db="EMBL/GenBank/DDBJ databases">
        <title>Complete sequence of Escherichia coli C str. ATCC 8739.</title>
        <authorList>
            <person name="Copeland A."/>
            <person name="Lucas S."/>
            <person name="Lapidus A."/>
            <person name="Glavina del Rio T."/>
            <person name="Dalin E."/>
            <person name="Tice H."/>
            <person name="Bruce D."/>
            <person name="Goodwin L."/>
            <person name="Pitluck S."/>
            <person name="Kiss H."/>
            <person name="Brettin T."/>
            <person name="Detter J.C."/>
            <person name="Han C."/>
            <person name="Kuske C.R."/>
            <person name="Schmutz J."/>
            <person name="Larimer F."/>
            <person name="Land M."/>
            <person name="Hauser L."/>
            <person name="Kyrpides N."/>
            <person name="Mikhailova N."/>
            <person name="Ingram L."/>
            <person name="Richardson P."/>
        </authorList>
    </citation>
    <scope>NUCLEOTIDE SEQUENCE [LARGE SCALE GENOMIC DNA]</scope>
    <source>
        <strain>ATCC 8739 / DSM 1576 / NBRC 3972 / NCIMB 8545 / WDCM 00012 / Crooks</strain>
    </source>
</reference>
<proteinExistence type="inferred from homology"/>